<evidence type="ECO:0000255" key="1">
    <source>
        <dbReference type="HAMAP-Rule" id="MF_00180"/>
    </source>
</evidence>
<keyword id="KW-0456">Lyase</keyword>
<keyword id="KW-0460">Magnesium</keyword>
<keyword id="KW-0464">Manganese</keyword>
<keyword id="KW-0479">Metal-binding</keyword>
<keyword id="KW-0686">Riboflavin biosynthesis</keyword>
<dbReference type="EC" id="4.1.99.12" evidence="1"/>
<dbReference type="EMBL" id="M27139">
    <property type="protein sequence ID" value="AAA27538.1"/>
    <property type="molecule type" value="Genomic_DNA"/>
</dbReference>
<dbReference type="PIR" id="C35081">
    <property type="entry name" value="C35081"/>
</dbReference>
<dbReference type="RefSeq" id="WP_038897477.1">
    <property type="nucleotide sequence ID" value="NZ_UAVF01000022.1"/>
</dbReference>
<dbReference type="SMR" id="P16448"/>
<dbReference type="PATRIC" id="fig|669.65.peg.3623"/>
<dbReference type="UniPathway" id="UPA00275">
    <property type="reaction ID" value="UER00399"/>
</dbReference>
<dbReference type="GO" id="GO:0005829">
    <property type="term" value="C:cytosol"/>
    <property type="evidence" value="ECO:0007669"/>
    <property type="project" value="TreeGrafter"/>
</dbReference>
<dbReference type="GO" id="GO:0008686">
    <property type="term" value="F:3,4-dihydroxy-2-butanone-4-phosphate synthase activity"/>
    <property type="evidence" value="ECO:0007669"/>
    <property type="project" value="UniProtKB-UniRule"/>
</dbReference>
<dbReference type="GO" id="GO:0000287">
    <property type="term" value="F:magnesium ion binding"/>
    <property type="evidence" value="ECO:0007669"/>
    <property type="project" value="UniProtKB-UniRule"/>
</dbReference>
<dbReference type="GO" id="GO:0030145">
    <property type="term" value="F:manganese ion binding"/>
    <property type="evidence" value="ECO:0007669"/>
    <property type="project" value="UniProtKB-UniRule"/>
</dbReference>
<dbReference type="GO" id="GO:0009231">
    <property type="term" value="P:riboflavin biosynthetic process"/>
    <property type="evidence" value="ECO:0007669"/>
    <property type="project" value="UniProtKB-UniRule"/>
</dbReference>
<dbReference type="FunFam" id="3.90.870.10:FF:000002">
    <property type="entry name" value="3,4-dihydroxy-2-butanone 4-phosphate synthase"/>
    <property type="match status" value="1"/>
</dbReference>
<dbReference type="Gene3D" id="3.90.870.10">
    <property type="entry name" value="DHBP synthase"/>
    <property type="match status" value="1"/>
</dbReference>
<dbReference type="HAMAP" id="MF_00180">
    <property type="entry name" value="RibB"/>
    <property type="match status" value="1"/>
</dbReference>
<dbReference type="InterPro" id="IPR017945">
    <property type="entry name" value="DHBP_synth_RibB-like_a/b_dom"/>
</dbReference>
<dbReference type="InterPro" id="IPR000422">
    <property type="entry name" value="DHBP_synthase_RibB"/>
</dbReference>
<dbReference type="NCBIfam" id="TIGR00506">
    <property type="entry name" value="ribB"/>
    <property type="match status" value="1"/>
</dbReference>
<dbReference type="PANTHER" id="PTHR21327:SF38">
    <property type="entry name" value="3,4-DIHYDROXY-2-BUTANONE 4-PHOSPHATE SYNTHASE"/>
    <property type="match status" value="1"/>
</dbReference>
<dbReference type="PANTHER" id="PTHR21327">
    <property type="entry name" value="GTP CYCLOHYDROLASE II-RELATED"/>
    <property type="match status" value="1"/>
</dbReference>
<dbReference type="Pfam" id="PF00926">
    <property type="entry name" value="DHBP_synthase"/>
    <property type="match status" value="1"/>
</dbReference>
<dbReference type="SUPFAM" id="SSF55821">
    <property type="entry name" value="YrdC/RibB"/>
    <property type="match status" value="1"/>
</dbReference>
<name>RIBB_VIBHA</name>
<organism>
    <name type="scientific">Vibrio harveyi</name>
    <name type="common">Beneckea harveyi</name>
    <dbReference type="NCBI Taxonomy" id="669"/>
    <lineage>
        <taxon>Bacteria</taxon>
        <taxon>Pseudomonadati</taxon>
        <taxon>Pseudomonadota</taxon>
        <taxon>Gammaproteobacteria</taxon>
        <taxon>Vibrionales</taxon>
        <taxon>Vibrionaceae</taxon>
        <taxon>Vibrio</taxon>
    </lineage>
</organism>
<proteinExistence type="inferred from homology"/>
<accession>P16448</accession>
<comment type="function">
    <text evidence="1">Catalyzes the conversion of D-ribulose 5-phosphate to formate and 3,4-dihydroxy-2-butanone 4-phosphate.</text>
</comment>
<comment type="catalytic activity">
    <reaction evidence="1">
        <text>D-ribulose 5-phosphate = (2S)-2-hydroxy-3-oxobutyl phosphate + formate + H(+)</text>
        <dbReference type="Rhea" id="RHEA:18457"/>
        <dbReference type="ChEBI" id="CHEBI:15378"/>
        <dbReference type="ChEBI" id="CHEBI:15740"/>
        <dbReference type="ChEBI" id="CHEBI:58121"/>
        <dbReference type="ChEBI" id="CHEBI:58830"/>
        <dbReference type="EC" id="4.1.99.12"/>
    </reaction>
</comment>
<comment type="cofactor">
    <cofactor evidence="1">
        <name>Mg(2+)</name>
        <dbReference type="ChEBI" id="CHEBI:18420"/>
    </cofactor>
    <cofactor evidence="1">
        <name>Mn(2+)</name>
        <dbReference type="ChEBI" id="CHEBI:29035"/>
    </cofactor>
    <text evidence="1">Binds 2 divalent metal cations per subunit. Magnesium or manganese.</text>
</comment>
<comment type="pathway">
    <text evidence="1">Cofactor biosynthesis; riboflavin biosynthesis; 2-hydroxy-3-oxobutyl phosphate from D-ribulose 5-phosphate: step 1/1.</text>
</comment>
<comment type="subunit">
    <text evidence="1">Homodimer.</text>
</comment>
<comment type="similarity">
    <text evidence="1">Belongs to the DHBP synthase family.</text>
</comment>
<sequence>MSSTSLLDEFGTPVQRVERAIEALKNGLGVLLMDDEDRENEGDLIFSAQHLTEAQMALMIREGSGIVCLCLTEERANWLDLPPMVKDNCSKNQTAFTVSIEAKEGVTTGVSAKDRVTTVKTATYFDAQPEDLARPGHVFPLVAKTNGVLARRGHTEGTIDLMYLANLVPSGILCELTNPDGTMAKLPETIEFARRHGMPVLTIEDIVDYRTGIDLRNEYKSGLVREVSWS</sequence>
<gene>
    <name evidence="1" type="primary">ribB</name>
    <name type="synonym">luxH</name>
</gene>
<feature type="chain" id="PRO_0000151815" description="3,4-dihydroxy-2-butanone 4-phosphate synthase">
    <location>
        <begin position="1"/>
        <end position="230"/>
    </location>
</feature>
<feature type="binding site" evidence="1">
    <location>
        <begin position="38"/>
        <end position="39"/>
    </location>
    <ligand>
        <name>D-ribulose 5-phosphate</name>
        <dbReference type="ChEBI" id="CHEBI:58121"/>
    </ligand>
</feature>
<feature type="binding site" evidence="1">
    <location>
        <position position="39"/>
    </location>
    <ligand>
        <name>Mg(2+)</name>
        <dbReference type="ChEBI" id="CHEBI:18420"/>
        <label>1</label>
    </ligand>
</feature>
<feature type="binding site" evidence="1">
    <location>
        <position position="39"/>
    </location>
    <ligand>
        <name>Mg(2+)</name>
        <dbReference type="ChEBI" id="CHEBI:18420"/>
        <label>2</label>
    </ligand>
</feature>
<feature type="binding site" evidence="1">
    <location>
        <position position="43"/>
    </location>
    <ligand>
        <name>D-ribulose 5-phosphate</name>
        <dbReference type="ChEBI" id="CHEBI:58121"/>
    </ligand>
</feature>
<feature type="binding site" evidence="1">
    <location>
        <begin position="151"/>
        <end position="155"/>
    </location>
    <ligand>
        <name>D-ribulose 5-phosphate</name>
        <dbReference type="ChEBI" id="CHEBI:58121"/>
    </ligand>
</feature>
<feature type="binding site" evidence="1">
    <location>
        <position position="154"/>
    </location>
    <ligand>
        <name>Mg(2+)</name>
        <dbReference type="ChEBI" id="CHEBI:18420"/>
        <label>2</label>
    </ligand>
</feature>
<feature type="binding site" evidence="1">
    <location>
        <position position="175"/>
    </location>
    <ligand>
        <name>D-ribulose 5-phosphate</name>
        <dbReference type="ChEBI" id="CHEBI:58121"/>
    </ligand>
</feature>
<feature type="site" description="Essential for catalytic activity" evidence="1">
    <location>
        <position position="137"/>
    </location>
</feature>
<feature type="site" description="Essential for catalytic activity" evidence="1">
    <location>
        <position position="175"/>
    </location>
</feature>
<reference key="1">
    <citation type="journal article" date="1990" name="J. Biol. Chem.">
        <title>Delineation of the transcriptional boundaries of the lux operon of Vibrio harveyi demonstrates the presence of two new lux genes.</title>
        <authorList>
            <person name="Swartzman E."/>
            <person name="Miyamoto C."/>
            <person name="Graham A."/>
            <person name="Meighen E."/>
        </authorList>
    </citation>
    <scope>NUCLEOTIDE SEQUENCE [GENOMIC DNA]</scope>
</reference>
<protein>
    <recommendedName>
        <fullName evidence="1">3,4-dihydroxy-2-butanone 4-phosphate synthase</fullName>
        <shortName evidence="1">DHBP synthase</shortName>
        <ecNumber evidence="1">4.1.99.12</ecNumber>
    </recommendedName>
    <alternativeName>
        <fullName>LUXH protein</fullName>
    </alternativeName>
</protein>